<accession>B8CND5</accession>
<keyword id="KW-0687">Ribonucleoprotein</keyword>
<keyword id="KW-0689">Ribosomal protein</keyword>
<keyword id="KW-0694">RNA-binding</keyword>
<keyword id="KW-0699">rRNA-binding</keyword>
<organism>
    <name type="scientific">Shewanella piezotolerans (strain WP3 / JCM 13877)</name>
    <dbReference type="NCBI Taxonomy" id="225849"/>
    <lineage>
        <taxon>Bacteria</taxon>
        <taxon>Pseudomonadati</taxon>
        <taxon>Pseudomonadota</taxon>
        <taxon>Gammaproteobacteria</taxon>
        <taxon>Alteromonadales</taxon>
        <taxon>Shewanellaceae</taxon>
        <taxon>Shewanella</taxon>
    </lineage>
</organism>
<feature type="chain" id="PRO_1000144605" description="Large ribosomal subunit protein uL23">
    <location>
        <begin position="1"/>
        <end position="100"/>
    </location>
</feature>
<gene>
    <name evidence="1" type="primary">rplW</name>
    <name type="ordered locus">swp_2013</name>
</gene>
<comment type="function">
    <text evidence="1">One of the early assembly proteins it binds 23S rRNA. One of the proteins that surrounds the polypeptide exit tunnel on the outside of the ribosome. Forms the main docking site for trigger factor binding to the ribosome.</text>
</comment>
<comment type="subunit">
    <text evidence="1">Part of the 50S ribosomal subunit. Contacts protein L29, and trigger factor when it is bound to the ribosome.</text>
</comment>
<comment type="similarity">
    <text evidence="1">Belongs to the universal ribosomal protein uL23 family.</text>
</comment>
<evidence type="ECO:0000255" key="1">
    <source>
        <dbReference type="HAMAP-Rule" id="MF_01369"/>
    </source>
</evidence>
<evidence type="ECO:0000305" key="2"/>
<reference key="1">
    <citation type="journal article" date="2008" name="PLoS ONE">
        <title>Environmental adaptation: genomic analysis of the piezotolerant and psychrotolerant deep-sea iron reducing bacterium Shewanella piezotolerans WP3.</title>
        <authorList>
            <person name="Wang F."/>
            <person name="Wang J."/>
            <person name="Jian H."/>
            <person name="Zhang B."/>
            <person name="Li S."/>
            <person name="Wang F."/>
            <person name="Zeng X."/>
            <person name="Gao L."/>
            <person name="Bartlett D.H."/>
            <person name="Yu J."/>
            <person name="Hu S."/>
            <person name="Xiao X."/>
        </authorList>
    </citation>
    <scope>NUCLEOTIDE SEQUENCE [LARGE SCALE GENOMIC DNA]</scope>
    <source>
        <strain>WP3 / JCM 13877</strain>
    </source>
</reference>
<protein>
    <recommendedName>
        <fullName evidence="1">Large ribosomal subunit protein uL23</fullName>
    </recommendedName>
    <alternativeName>
        <fullName evidence="2">50S ribosomal protein L23</fullName>
    </alternativeName>
</protein>
<sequence>MISEERLLKVILAPHISEKSTVNAEKNNTVVFRVAIDATKAEVKAAVAQLFEVEVDSVRTLVNKGKTKRHGARTGRRSDWKKAYVTLAEGADIDFVGGAE</sequence>
<dbReference type="EMBL" id="CP000472">
    <property type="protein sequence ID" value="ACJ28769.1"/>
    <property type="molecule type" value="Genomic_DNA"/>
</dbReference>
<dbReference type="RefSeq" id="WP_020912141.1">
    <property type="nucleotide sequence ID" value="NC_011566.1"/>
</dbReference>
<dbReference type="SMR" id="B8CND5"/>
<dbReference type="STRING" id="225849.swp_2013"/>
<dbReference type="KEGG" id="swp:swp_2013"/>
<dbReference type="eggNOG" id="COG0089">
    <property type="taxonomic scope" value="Bacteria"/>
</dbReference>
<dbReference type="HOGENOM" id="CLU_037562_3_1_6"/>
<dbReference type="OrthoDB" id="9793353at2"/>
<dbReference type="Proteomes" id="UP000000753">
    <property type="component" value="Chromosome"/>
</dbReference>
<dbReference type="GO" id="GO:1990904">
    <property type="term" value="C:ribonucleoprotein complex"/>
    <property type="evidence" value="ECO:0007669"/>
    <property type="project" value="UniProtKB-KW"/>
</dbReference>
<dbReference type="GO" id="GO:0005840">
    <property type="term" value="C:ribosome"/>
    <property type="evidence" value="ECO:0007669"/>
    <property type="project" value="UniProtKB-KW"/>
</dbReference>
<dbReference type="GO" id="GO:0019843">
    <property type="term" value="F:rRNA binding"/>
    <property type="evidence" value="ECO:0007669"/>
    <property type="project" value="UniProtKB-UniRule"/>
</dbReference>
<dbReference type="GO" id="GO:0003735">
    <property type="term" value="F:structural constituent of ribosome"/>
    <property type="evidence" value="ECO:0007669"/>
    <property type="project" value="InterPro"/>
</dbReference>
<dbReference type="GO" id="GO:0006412">
    <property type="term" value="P:translation"/>
    <property type="evidence" value="ECO:0007669"/>
    <property type="project" value="UniProtKB-UniRule"/>
</dbReference>
<dbReference type="FunFam" id="3.30.70.330:FF:000001">
    <property type="entry name" value="50S ribosomal protein L23"/>
    <property type="match status" value="1"/>
</dbReference>
<dbReference type="Gene3D" id="3.30.70.330">
    <property type="match status" value="1"/>
</dbReference>
<dbReference type="HAMAP" id="MF_01369_B">
    <property type="entry name" value="Ribosomal_uL23_B"/>
    <property type="match status" value="1"/>
</dbReference>
<dbReference type="InterPro" id="IPR012677">
    <property type="entry name" value="Nucleotide-bd_a/b_plait_sf"/>
</dbReference>
<dbReference type="InterPro" id="IPR013025">
    <property type="entry name" value="Ribosomal_uL23-like"/>
</dbReference>
<dbReference type="InterPro" id="IPR012678">
    <property type="entry name" value="Ribosomal_uL23/eL15/eS24_sf"/>
</dbReference>
<dbReference type="InterPro" id="IPR001014">
    <property type="entry name" value="Ribosomal_uL23_CS"/>
</dbReference>
<dbReference type="NCBIfam" id="NF004358">
    <property type="entry name" value="PRK05738.1-1"/>
    <property type="match status" value="1"/>
</dbReference>
<dbReference type="NCBIfam" id="NF004359">
    <property type="entry name" value="PRK05738.1-3"/>
    <property type="match status" value="1"/>
</dbReference>
<dbReference type="NCBIfam" id="NF004363">
    <property type="entry name" value="PRK05738.2-4"/>
    <property type="match status" value="1"/>
</dbReference>
<dbReference type="PANTHER" id="PTHR11620">
    <property type="entry name" value="60S RIBOSOMAL PROTEIN L23A"/>
    <property type="match status" value="1"/>
</dbReference>
<dbReference type="Pfam" id="PF00276">
    <property type="entry name" value="Ribosomal_L23"/>
    <property type="match status" value="1"/>
</dbReference>
<dbReference type="SUPFAM" id="SSF54189">
    <property type="entry name" value="Ribosomal proteins S24e, L23 and L15e"/>
    <property type="match status" value="1"/>
</dbReference>
<dbReference type="PROSITE" id="PS00050">
    <property type="entry name" value="RIBOSOMAL_L23"/>
    <property type="match status" value="1"/>
</dbReference>
<name>RL23_SHEPW</name>
<proteinExistence type="inferred from homology"/>